<organism>
    <name type="scientific">Rattus norvegicus</name>
    <name type="common">Rat</name>
    <dbReference type="NCBI Taxonomy" id="10116"/>
    <lineage>
        <taxon>Eukaryota</taxon>
        <taxon>Metazoa</taxon>
        <taxon>Chordata</taxon>
        <taxon>Craniata</taxon>
        <taxon>Vertebrata</taxon>
        <taxon>Euteleostomi</taxon>
        <taxon>Mammalia</taxon>
        <taxon>Eutheria</taxon>
        <taxon>Euarchontoglires</taxon>
        <taxon>Glires</taxon>
        <taxon>Rodentia</taxon>
        <taxon>Myomorpha</taxon>
        <taxon>Muroidea</taxon>
        <taxon>Muridae</taxon>
        <taxon>Murinae</taxon>
        <taxon>Rattus</taxon>
    </lineage>
</organism>
<keyword id="KW-0007">Acetylation</keyword>
<keyword id="KW-0963">Cytoplasm</keyword>
<keyword id="KW-0903">Direct protein sequencing</keyword>
<keyword id="KW-1185">Reference proteome</keyword>
<keyword id="KW-0687">Ribonucleoprotein</keyword>
<keyword id="KW-0689">Ribosomal protein</keyword>
<comment type="function">
    <text evidence="2">Component of the large ribosomal subunit. The ribosome is a large ribonucleoprotein complex responsible for the synthesis of proteins in the cell.</text>
</comment>
<comment type="subunit">
    <text evidence="2">Component of the large ribosomal subunit.</text>
</comment>
<comment type="subcellular location">
    <subcellularLocation>
        <location evidence="2">Cytoplasm</location>
        <location evidence="2">Cytosol</location>
    </subcellularLocation>
    <subcellularLocation>
        <location evidence="2">Cytoplasm</location>
    </subcellularLocation>
    <text evidence="1 2">Detected on cytosolic polysomes.</text>
</comment>
<comment type="similarity">
    <text evidence="4">Belongs to the eukaryotic ribosomal protein eL36 family.</text>
</comment>
<dbReference type="EMBL" id="X68284">
    <property type="protein sequence ID" value="CAA48345.1"/>
    <property type="molecule type" value="mRNA"/>
</dbReference>
<dbReference type="EMBL" id="BC058475">
    <property type="protein sequence ID" value="AAH58475.1"/>
    <property type="molecule type" value="mRNA"/>
</dbReference>
<dbReference type="PIR" id="JN0483">
    <property type="entry name" value="JN0483"/>
</dbReference>
<dbReference type="RefSeq" id="NP_071949.1">
    <property type="nucleotide sequence ID" value="NM_022504.1"/>
</dbReference>
<dbReference type="SMR" id="P39032"/>
<dbReference type="BioGRID" id="248667">
    <property type="interactions" value="2"/>
</dbReference>
<dbReference type="FunCoup" id="P39032">
    <property type="interactions" value="2182"/>
</dbReference>
<dbReference type="STRING" id="10116.ENSRNOP00000058934"/>
<dbReference type="GlyGen" id="P39032">
    <property type="glycosylation" value="1 site, 1 O-linked glycan (1 site)"/>
</dbReference>
<dbReference type="iPTMnet" id="P39032"/>
<dbReference type="PhosphoSitePlus" id="P39032"/>
<dbReference type="jPOST" id="P39032"/>
<dbReference type="PaxDb" id="10116-ENSRNOP00000058934"/>
<dbReference type="GeneID" id="58927"/>
<dbReference type="KEGG" id="rno:58927"/>
<dbReference type="AGR" id="RGD:62085"/>
<dbReference type="CTD" id="25873"/>
<dbReference type="RGD" id="62085">
    <property type="gene designation" value="Rpl36"/>
</dbReference>
<dbReference type="eggNOG" id="KOG3452">
    <property type="taxonomic scope" value="Eukaryota"/>
</dbReference>
<dbReference type="InParanoid" id="P39032"/>
<dbReference type="OrthoDB" id="55042at9989"/>
<dbReference type="PhylomeDB" id="P39032"/>
<dbReference type="PRO" id="PR:P39032"/>
<dbReference type="Proteomes" id="UP000002494">
    <property type="component" value="Unplaced"/>
</dbReference>
<dbReference type="GO" id="GO:0005737">
    <property type="term" value="C:cytoplasm"/>
    <property type="evidence" value="ECO:0000266"/>
    <property type="project" value="RGD"/>
</dbReference>
<dbReference type="GO" id="GO:0022625">
    <property type="term" value="C:cytosolic large ribosomal subunit"/>
    <property type="evidence" value="ECO:0000314"/>
    <property type="project" value="RGD"/>
</dbReference>
<dbReference type="GO" id="GO:0022626">
    <property type="term" value="C:cytosolic ribosome"/>
    <property type="evidence" value="ECO:0000266"/>
    <property type="project" value="RGD"/>
</dbReference>
<dbReference type="GO" id="GO:0045202">
    <property type="term" value="C:synapse"/>
    <property type="evidence" value="ECO:0000266"/>
    <property type="project" value="RGD"/>
</dbReference>
<dbReference type="GO" id="GO:0003735">
    <property type="term" value="F:structural constituent of ribosome"/>
    <property type="evidence" value="ECO:0000266"/>
    <property type="project" value="RGD"/>
</dbReference>
<dbReference type="GO" id="GO:0002181">
    <property type="term" value="P:cytoplasmic translation"/>
    <property type="evidence" value="ECO:0000266"/>
    <property type="project" value="RGD"/>
</dbReference>
<dbReference type="FunFam" id="1.10.10.1760:FF:000002">
    <property type="entry name" value="60S ribosomal protein L36"/>
    <property type="match status" value="1"/>
</dbReference>
<dbReference type="Gene3D" id="1.10.10.1760">
    <property type="entry name" value="60S ribosomal protein L36"/>
    <property type="match status" value="1"/>
</dbReference>
<dbReference type="InterPro" id="IPR000509">
    <property type="entry name" value="Ribosomal_eL36"/>
</dbReference>
<dbReference type="InterPro" id="IPR038097">
    <property type="entry name" value="Ribosomal_eL36_sf"/>
</dbReference>
<dbReference type="PANTHER" id="PTHR10114">
    <property type="entry name" value="60S RIBOSOMAL PROTEIN L36"/>
    <property type="match status" value="1"/>
</dbReference>
<dbReference type="Pfam" id="PF01158">
    <property type="entry name" value="Ribosomal_L36e"/>
    <property type="match status" value="1"/>
</dbReference>
<dbReference type="PROSITE" id="PS01190">
    <property type="entry name" value="RIBOSOMAL_L36E"/>
    <property type="match status" value="1"/>
</dbReference>
<sequence length="105" mass="12268">MALRYPMAVGLNKGHKVTKNVSKPRHSRRRGRLTKHTKFVRDMIREVCAFAPYERRAMELLKVSKDKRALKFIKKRVGTHIRAKRKREELSNVLAAMRKAAAKKD</sequence>
<reference key="1">
    <citation type="journal article" date="1993" name="Biochem. Biophys. Res. Commun.">
        <title>The primary structure of rat ribosomal protein L36.</title>
        <authorList>
            <person name="Chan Y.-L."/>
            <person name="Paz V."/>
            <person name="Olvera J."/>
            <person name="Wool I.G."/>
        </authorList>
    </citation>
    <scope>NUCLEOTIDE SEQUENCE [MRNA]</scope>
    <scope>PROTEIN SEQUENCE OF 2-40</scope>
    <source>
        <strain>Sprague-Dawley</strain>
        <tissue>Liver</tissue>
    </source>
</reference>
<reference key="2">
    <citation type="journal article" date="2004" name="Genome Res.">
        <title>The status, quality, and expansion of the NIH full-length cDNA project: the Mammalian Gene Collection (MGC).</title>
        <authorList>
            <consortium name="The MGC Project Team"/>
        </authorList>
    </citation>
    <scope>NUCLEOTIDE SEQUENCE [LARGE SCALE MRNA]</scope>
    <source>
        <tissue>Pituitary</tissue>
    </source>
</reference>
<accession>P39032</accession>
<accession>Q6PDV5</accession>
<proteinExistence type="evidence at protein level"/>
<gene>
    <name type="primary">Rpl36</name>
</gene>
<evidence type="ECO:0000250" key="1">
    <source>
        <dbReference type="UniProtKB" id="Q2YGT9"/>
    </source>
</evidence>
<evidence type="ECO:0000250" key="2">
    <source>
        <dbReference type="UniProtKB" id="Q9Y3U8"/>
    </source>
</evidence>
<evidence type="ECO:0000269" key="3">
    <source>
    </source>
</evidence>
<evidence type="ECO:0000305" key="4"/>
<protein>
    <recommendedName>
        <fullName evidence="4">Large ribosomal subunit protein eL36</fullName>
    </recommendedName>
    <alternativeName>
        <fullName>60S ribosomal protein L36</fullName>
    </alternativeName>
</protein>
<feature type="initiator methionine" description="Removed" evidence="3">
    <location>
        <position position="1"/>
    </location>
</feature>
<feature type="chain" id="PRO_0000195009" description="Large ribosomal subunit protein eL36">
    <location>
        <begin position="2"/>
        <end position="105"/>
    </location>
</feature>
<feature type="modified residue" description="N6-acetyllysine" evidence="2">
    <location>
        <position position="62"/>
    </location>
</feature>
<feature type="sequence conflict" description="In Ref. 2; AAH58475." evidence="4" ref="2">
    <original>A</original>
    <variation>G</variation>
    <location>
        <position position="49"/>
    </location>
</feature>
<name>RL36_RAT</name>